<proteinExistence type="inferred from homology"/>
<sequence>MSRIGKKPVSVPAGVTAAIEGKTLSVKGPKGTLSISLADEVSYAIEDGSISVQPINETKRARSFWGMQRTLVQNLITGVTEGYSKTLQITGVGYRANVQGKNLKLQLGYSHDVDFAIPEGITIATPDQTTVQISGIDKQKVGQVAAEIRRWRKPEPYKGKGIKYAGEYIFRKEGKKK</sequence>
<keyword id="KW-1185">Reference proteome</keyword>
<keyword id="KW-0687">Ribonucleoprotein</keyword>
<keyword id="KW-0689">Ribosomal protein</keyword>
<keyword id="KW-0694">RNA-binding</keyword>
<keyword id="KW-0699">rRNA-binding</keyword>
<accession>A5V5Y7</accession>
<reference key="1">
    <citation type="journal article" date="2010" name="J. Bacteriol.">
        <title>Genome sequence of the dioxin-mineralizing bacterium Sphingomonas wittichii RW1.</title>
        <authorList>
            <person name="Miller T.R."/>
            <person name="Delcher A.L."/>
            <person name="Salzberg S.L."/>
            <person name="Saunders E."/>
            <person name="Detter J.C."/>
            <person name="Halden R.U."/>
        </authorList>
    </citation>
    <scope>NUCLEOTIDE SEQUENCE [LARGE SCALE GENOMIC DNA]</scope>
    <source>
        <strain>DSM 6014 / CCUG 31198 / JCM 15750 / NBRC 105917 / EY 4224 / RW1</strain>
    </source>
</reference>
<organism>
    <name type="scientific">Rhizorhabdus wittichii (strain DSM 6014 / CCUG 31198 / JCM 15750 / NBRC 105917 / EY 4224 / RW1)</name>
    <name type="common">Sphingomonas wittichii</name>
    <dbReference type="NCBI Taxonomy" id="392499"/>
    <lineage>
        <taxon>Bacteria</taxon>
        <taxon>Pseudomonadati</taxon>
        <taxon>Pseudomonadota</taxon>
        <taxon>Alphaproteobacteria</taxon>
        <taxon>Sphingomonadales</taxon>
        <taxon>Sphingomonadaceae</taxon>
        <taxon>Rhizorhabdus</taxon>
    </lineage>
</organism>
<gene>
    <name evidence="1" type="primary">rplF</name>
    <name type="ordered locus">Swit_1338</name>
</gene>
<name>RL6_RHIWR</name>
<feature type="chain" id="PRO_1000055312" description="Large ribosomal subunit protein uL6">
    <location>
        <begin position="1"/>
        <end position="177"/>
    </location>
</feature>
<evidence type="ECO:0000255" key="1">
    <source>
        <dbReference type="HAMAP-Rule" id="MF_01365"/>
    </source>
</evidence>
<evidence type="ECO:0000305" key="2"/>
<protein>
    <recommendedName>
        <fullName evidence="1">Large ribosomal subunit protein uL6</fullName>
    </recommendedName>
    <alternativeName>
        <fullName evidence="2">50S ribosomal protein L6</fullName>
    </alternativeName>
</protein>
<dbReference type="EMBL" id="CP000699">
    <property type="protein sequence ID" value="ABQ67703.1"/>
    <property type="molecule type" value="Genomic_DNA"/>
</dbReference>
<dbReference type="SMR" id="A5V5Y7"/>
<dbReference type="STRING" id="392499.Swit_1338"/>
<dbReference type="PaxDb" id="392499-Swit_1338"/>
<dbReference type="KEGG" id="swi:Swit_1338"/>
<dbReference type="eggNOG" id="COG0097">
    <property type="taxonomic scope" value="Bacteria"/>
</dbReference>
<dbReference type="HOGENOM" id="CLU_065464_1_2_5"/>
<dbReference type="OrthoDB" id="9805007at2"/>
<dbReference type="Proteomes" id="UP000001989">
    <property type="component" value="Chromosome"/>
</dbReference>
<dbReference type="GO" id="GO:0022625">
    <property type="term" value="C:cytosolic large ribosomal subunit"/>
    <property type="evidence" value="ECO:0007669"/>
    <property type="project" value="TreeGrafter"/>
</dbReference>
<dbReference type="GO" id="GO:0019843">
    <property type="term" value="F:rRNA binding"/>
    <property type="evidence" value="ECO:0007669"/>
    <property type="project" value="UniProtKB-UniRule"/>
</dbReference>
<dbReference type="GO" id="GO:0003735">
    <property type="term" value="F:structural constituent of ribosome"/>
    <property type="evidence" value="ECO:0007669"/>
    <property type="project" value="InterPro"/>
</dbReference>
<dbReference type="GO" id="GO:0002181">
    <property type="term" value="P:cytoplasmic translation"/>
    <property type="evidence" value="ECO:0007669"/>
    <property type="project" value="TreeGrafter"/>
</dbReference>
<dbReference type="FunFam" id="3.90.930.12:FF:000001">
    <property type="entry name" value="50S ribosomal protein L6"/>
    <property type="match status" value="1"/>
</dbReference>
<dbReference type="FunFam" id="3.90.930.12:FF:000002">
    <property type="entry name" value="50S ribosomal protein L6"/>
    <property type="match status" value="1"/>
</dbReference>
<dbReference type="Gene3D" id="3.90.930.12">
    <property type="entry name" value="Ribosomal protein L6, alpha-beta domain"/>
    <property type="match status" value="2"/>
</dbReference>
<dbReference type="HAMAP" id="MF_01365_B">
    <property type="entry name" value="Ribosomal_uL6_B"/>
    <property type="match status" value="1"/>
</dbReference>
<dbReference type="InterPro" id="IPR000702">
    <property type="entry name" value="Ribosomal_uL6-like"/>
</dbReference>
<dbReference type="InterPro" id="IPR036789">
    <property type="entry name" value="Ribosomal_uL6-like_a/b-dom_sf"/>
</dbReference>
<dbReference type="InterPro" id="IPR020040">
    <property type="entry name" value="Ribosomal_uL6_a/b-dom"/>
</dbReference>
<dbReference type="InterPro" id="IPR019906">
    <property type="entry name" value="Ribosomal_uL6_bac-type"/>
</dbReference>
<dbReference type="InterPro" id="IPR002358">
    <property type="entry name" value="Ribosomal_uL6_CS"/>
</dbReference>
<dbReference type="NCBIfam" id="TIGR03654">
    <property type="entry name" value="L6_bact"/>
    <property type="match status" value="1"/>
</dbReference>
<dbReference type="PANTHER" id="PTHR11655">
    <property type="entry name" value="60S/50S RIBOSOMAL PROTEIN L6/L9"/>
    <property type="match status" value="1"/>
</dbReference>
<dbReference type="PANTHER" id="PTHR11655:SF14">
    <property type="entry name" value="LARGE RIBOSOMAL SUBUNIT PROTEIN UL6M"/>
    <property type="match status" value="1"/>
</dbReference>
<dbReference type="Pfam" id="PF00347">
    <property type="entry name" value="Ribosomal_L6"/>
    <property type="match status" value="2"/>
</dbReference>
<dbReference type="PIRSF" id="PIRSF002162">
    <property type="entry name" value="Ribosomal_L6"/>
    <property type="match status" value="1"/>
</dbReference>
<dbReference type="PRINTS" id="PR00059">
    <property type="entry name" value="RIBOSOMALL6"/>
</dbReference>
<dbReference type="SUPFAM" id="SSF56053">
    <property type="entry name" value="Ribosomal protein L6"/>
    <property type="match status" value="2"/>
</dbReference>
<dbReference type="PROSITE" id="PS00525">
    <property type="entry name" value="RIBOSOMAL_L6_1"/>
    <property type="match status" value="1"/>
</dbReference>
<comment type="function">
    <text evidence="1">This protein binds to the 23S rRNA, and is important in its secondary structure. It is located near the subunit interface in the base of the L7/L12 stalk, and near the tRNA binding site of the peptidyltransferase center.</text>
</comment>
<comment type="subunit">
    <text evidence="1">Part of the 50S ribosomal subunit.</text>
</comment>
<comment type="similarity">
    <text evidence="1">Belongs to the universal ribosomal protein uL6 family.</text>
</comment>